<feature type="chain" id="PRO_1000089055" description="Argininosuccinate synthase">
    <location>
        <begin position="1"/>
        <end position="398"/>
    </location>
</feature>
<feature type="binding site" evidence="1">
    <location>
        <begin position="9"/>
        <end position="17"/>
    </location>
    <ligand>
        <name>ATP</name>
        <dbReference type="ChEBI" id="CHEBI:30616"/>
    </ligand>
</feature>
<feature type="binding site" evidence="1">
    <location>
        <position position="85"/>
    </location>
    <ligand>
        <name>L-citrulline</name>
        <dbReference type="ChEBI" id="CHEBI:57743"/>
    </ligand>
</feature>
<feature type="binding site" evidence="1">
    <location>
        <position position="115"/>
    </location>
    <ligand>
        <name>ATP</name>
        <dbReference type="ChEBI" id="CHEBI:30616"/>
    </ligand>
</feature>
<feature type="binding site" evidence="1">
    <location>
        <position position="117"/>
    </location>
    <ligand>
        <name>L-aspartate</name>
        <dbReference type="ChEBI" id="CHEBI:29991"/>
    </ligand>
</feature>
<feature type="binding site" evidence="1">
    <location>
        <position position="121"/>
    </location>
    <ligand>
        <name>L-aspartate</name>
        <dbReference type="ChEBI" id="CHEBI:29991"/>
    </ligand>
</feature>
<feature type="binding site" evidence="1">
    <location>
        <position position="121"/>
    </location>
    <ligand>
        <name>L-citrulline</name>
        <dbReference type="ChEBI" id="CHEBI:57743"/>
    </ligand>
</feature>
<feature type="binding site" evidence="1">
    <location>
        <position position="122"/>
    </location>
    <ligand>
        <name>L-aspartate</name>
        <dbReference type="ChEBI" id="CHEBI:29991"/>
    </ligand>
</feature>
<feature type="binding site" evidence="1">
    <location>
        <position position="125"/>
    </location>
    <ligand>
        <name>L-citrulline</name>
        <dbReference type="ChEBI" id="CHEBI:57743"/>
    </ligand>
</feature>
<feature type="binding site" evidence="1">
    <location>
        <position position="173"/>
    </location>
    <ligand>
        <name>L-citrulline</name>
        <dbReference type="ChEBI" id="CHEBI:57743"/>
    </ligand>
</feature>
<feature type="binding site" evidence="1">
    <location>
        <position position="258"/>
    </location>
    <ligand>
        <name>L-citrulline</name>
        <dbReference type="ChEBI" id="CHEBI:57743"/>
    </ligand>
</feature>
<feature type="binding site" evidence="1">
    <location>
        <position position="270"/>
    </location>
    <ligand>
        <name>L-citrulline</name>
        <dbReference type="ChEBI" id="CHEBI:57743"/>
    </ligand>
</feature>
<protein>
    <recommendedName>
        <fullName evidence="1">Argininosuccinate synthase</fullName>
        <ecNumber evidence="1">6.3.4.5</ecNumber>
    </recommendedName>
    <alternativeName>
        <fullName evidence="1">Citrulline--aspartate ligase</fullName>
    </alternativeName>
</protein>
<reference key="1">
    <citation type="journal article" date="2010" name="Genome Biol.">
        <title>Structure and dynamics of the pan-genome of Streptococcus pneumoniae and closely related species.</title>
        <authorList>
            <person name="Donati C."/>
            <person name="Hiller N.L."/>
            <person name="Tettelin H."/>
            <person name="Muzzi A."/>
            <person name="Croucher N.J."/>
            <person name="Angiuoli S.V."/>
            <person name="Oggioni M."/>
            <person name="Dunning Hotopp J.C."/>
            <person name="Hu F.Z."/>
            <person name="Riley D.R."/>
            <person name="Covacci A."/>
            <person name="Mitchell T.J."/>
            <person name="Bentley S.D."/>
            <person name="Kilian M."/>
            <person name="Ehrlich G.D."/>
            <person name="Rappuoli R."/>
            <person name="Moxon E.R."/>
            <person name="Masignani V."/>
        </authorList>
    </citation>
    <scope>NUCLEOTIDE SEQUENCE [LARGE SCALE GENOMIC DNA]</scope>
    <source>
        <strain>Hungary19A-6</strain>
    </source>
</reference>
<keyword id="KW-0028">Amino-acid biosynthesis</keyword>
<keyword id="KW-0055">Arginine biosynthesis</keyword>
<keyword id="KW-0067">ATP-binding</keyword>
<keyword id="KW-0963">Cytoplasm</keyword>
<keyword id="KW-0436">Ligase</keyword>
<keyword id="KW-0547">Nucleotide-binding</keyword>
<comment type="catalytic activity">
    <reaction evidence="1">
        <text>L-citrulline + L-aspartate + ATP = 2-(N(omega)-L-arginino)succinate + AMP + diphosphate + H(+)</text>
        <dbReference type="Rhea" id="RHEA:10932"/>
        <dbReference type="ChEBI" id="CHEBI:15378"/>
        <dbReference type="ChEBI" id="CHEBI:29991"/>
        <dbReference type="ChEBI" id="CHEBI:30616"/>
        <dbReference type="ChEBI" id="CHEBI:33019"/>
        <dbReference type="ChEBI" id="CHEBI:57472"/>
        <dbReference type="ChEBI" id="CHEBI:57743"/>
        <dbReference type="ChEBI" id="CHEBI:456215"/>
        <dbReference type="EC" id="6.3.4.5"/>
    </reaction>
</comment>
<comment type="pathway">
    <text evidence="1">Amino-acid biosynthesis; L-arginine biosynthesis; L-arginine from L-ornithine and carbamoyl phosphate: step 2/3.</text>
</comment>
<comment type="subunit">
    <text evidence="1">Homotetramer.</text>
</comment>
<comment type="subcellular location">
    <subcellularLocation>
        <location evidence="1">Cytoplasm</location>
    </subcellularLocation>
</comment>
<comment type="similarity">
    <text evidence="1">Belongs to the argininosuccinate synthase family. Type 1 subfamily.</text>
</comment>
<name>ASSY_STRPI</name>
<evidence type="ECO:0000255" key="1">
    <source>
        <dbReference type="HAMAP-Rule" id="MF_00005"/>
    </source>
</evidence>
<dbReference type="EC" id="6.3.4.5" evidence="1"/>
<dbReference type="EMBL" id="CP000936">
    <property type="protein sequence ID" value="ACA36199.1"/>
    <property type="molecule type" value="Genomic_DNA"/>
</dbReference>
<dbReference type="RefSeq" id="WP_000031925.1">
    <property type="nucleotide sequence ID" value="NC_010380.1"/>
</dbReference>
<dbReference type="SMR" id="B1I814"/>
<dbReference type="KEGG" id="spv:SPH_0215"/>
<dbReference type="HOGENOM" id="CLU_032784_4_2_9"/>
<dbReference type="UniPathway" id="UPA00068">
    <property type="reaction ID" value="UER00113"/>
</dbReference>
<dbReference type="Proteomes" id="UP000002163">
    <property type="component" value="Chromosome"/>
</dbReference>
<dbReference type="GO" id="GO:0005737">
    <property type="term" value="C:cytoplasm"/>
    <property type="evidence" value="ECO:0007669"/>
    <property type="project" value="UniProtKB-SubCell"/>
</dbReference>
<dbReference type="GO" id="GO:0004055">
    <property type="term" value="F:argininosuccinate synthase activity"/>
    <property type="evidence" value="ECO:0007669"/>
    <property type="project" value="UniProtKB-UniRule"/>
</dbReference>
<dbReference type="GO" id="GO:0005524">
    <property type="term" value="F:ATP binding"/>
    <property type="evidence" value="ECO:0007669"/>
    <property type="project" value="UniProtKB-UniRule"/>
</dbReference>
<dbReference type="GO" id="GO:0000053">
    <property type="term" value="P:argininosuccinate metabolic process"/>
    <property type="evidence" value="ECO:0007669"/>
    <property type="project" value="TreeGrafter"/>
</dbReference>
<dbReference type="GO" id="GO:0006526">
    <property type="term" value="P:L-arginine biosynthetic process"/>
    <property type="evidence" value="ECO:0007669"/>
    <property type="project" value="UniProtKB-UniRule"/>
</dbReference>
<dbReference type="GO" id="GO:0000050">
    <property type="term" value="P:urea cycle"/>
    <property type="evidence" value="ECO:0007669"/>
    <property type="project" value="TreeGrafter"/>
</dbReference>
<dbReference type="CDD" id="cd01999">
    <property type="entry name" value="ASS"/>
    <property type="match status" value="1"/>
</dbReference>
<dbReference type="FunFam" id="1.20.5.470:FF:000002">
    <property type="entry name" value="Argininosuccinate synthase"/>
    <property type="match status" value="1"/>
</dbReference>
<dbReference type="FunFam" id="3.40.50.620:FF:000038">
    <property type="entry name" value="Argininosuccinate synthase"/>
    <property type="match status" value="1"/>
</dbReference>
<dbReference type="FunFam" id="3.90.1260.10:FF:000007">
    <property type="entry name" value="Argininosuccinate synthase"/>
    <property type="match status" value="1"/>
</dbReference>
<dbReference type="Gene3D" id="3.90.1260.10">
    <property type="entry name" value="Argininosuccinate synthetase, chain A, domain 2"/>
    <property type="match status" value="1"/>
</dbReference>
<dbReference type="Gene3D" id="3.40.50.620">
    <property type="entry name" value="HUPs"/>
    <property type="match status" value="1"/>
</dbReference>
<dbReference type="Gene3D" id="1.20.5.470">
    <property type="entry name" value="Single helix bin"/>
    <property type="match status" value="1"/>
</dbReference>
<dbReference type="HAMAP" id="MF_00005">
    <property type="entry name" value="Arg_succ_synth_type1"/>
    <property type="match status" value="1"/>
</dbReference>
<dbReference type="InterPro" id="IPR048268">
    <property type="entry name" value="Arginosuc_syn_C"/>
</dbReference>
<dbReference type="InterPro" id="IPR048267">
    <property type="entry name" value="Arginosuc_syn_N"/>
</dbReference>
<dbReference type="InterPro" id="IPR001518">
    <property type="entry name" value="Arginosuc_synth"/>
</dbReference>
<dbReference type="InterPro" id="IPR018223">
    <property type="entry name" value="Arginosuc_synth_CS"/>
</dbReference>
<dbReference type="InterPro" id="IPR023434">
    <property type="entry name" value="Arginosuc_synth_type_1_subfam"/>
</dbReference>
<dbReference type="InterPro" id="IPR024074">
    <property type="entry name" value="AS_cat/multimer_dom_body"/>
</dbReference>
<dbReference type="InterPro" id="IPR014729">
    <property type="entry name" value="Rossmann-like_a/b/a_fold"/>
</dbReference>
<dbReference type="NCBIfam" id="TIGR00032">
    <property type="entry name" value="argG"/>
    <property type="match status" value="1"/>
</dbReference>
<dbReference type="NCBIfam" id="NF001770">
    <property type="entry name" value="PRK00509.1"/>
    <property type="match status" value="1"/>
</dbReference>
<dbReference type="PANTHER" id="PTHR11587">
    <property type="entry name" value="ARGININOSUCCINATE SYNTHASE"/>
    <property type="match status" value="1"/>
</dbReference>
<dbReference type="PANTHER" id="PTHR11587:SF2">
    <property type="entry name" value="ARGININOSUCCINATE SYNTHASE"/>
    <property type="match status" value="1"/>
</dbReference>
<dbReference type="Pfam" id="PF20979">
    <property type="entry name" value="Arginosuc_syn_C"/>
    <property type="match status" value="1"/>
</dbReference>
<dbReference type="Pfam" id="PF00764">
    <property type="entry name" value="Arginosuc_synth"/>
    <property type="match status" value="1"/>
</dbReference>
<dbReference type="SUPFAM" id="SSF52402">
    <property type="entry name" value="Adenine nucleotide alpha hydrolases-like"/>
    <property type="match status" value="1"/>
</dbReference>
<dbReference type="SUPFAM" id="SSF69864">
    <property type="entry name" value="Argininosuccinate synthetase, C-terminal domain"/>
    <property type="match status" value="1"/>
</dbReference>
<dbReference type="PROSITE" id="PS00564">
    <property type="entry name" value="ARGININOSUCCIN_SYN_1"/>
    <property type="match status" value="1"/>
</dbReference>
<dbReference type="PROSITE" id="PS00565">
    <property type="entry name" value="ARGININOSUCCIN_SYN_2"/>
    <property type="match status" value="1"/>
</dbReference>
<gene>
    <name evidence="1" type="primary">argG</name>
    <name type="ordered locus">SPH_0215</name>
</gene>
<accession>B1I814</accession>
<sequence length="398" mass="44081">MSKEKVILAYSGGLDTSVAITWLKKDYDVVSVCMDVGEGKDLDFIHDKALKVGAVESYVIDVKDEFATDYVLVAHQSHAYYEQKYPLVSALSRPLISKKLVEIAHQIGATTIAHGCTGKGNDQVRFEVSIAALDLNLKVIAPVREWKWSREEEIYYAKENGVPVPADLDNPYSVDQNLWGRANECGILENPWNQAPEEAFGITTSPEQAPDMPEYIEIEFSEGVPVSLNGEVLKLADLIQKLNEIAGKHGVGRIDHVENRLVGIKSREIYECPGAVTLLTAHKEIEDLTLVREVAHFKPIIENELSNLIYNALWFSSATQALIAYIKETQKVVNGTAKVKLYKGSAQVVARKSPSSLYDENLATYTSADTFDQDAAVGFIKLWGLPTKVHSEVQKSAK</sequence>
<organism>
    <name type="scientific">Streptococcus pneumoniae (strain Hungary19A-6)</name>
    <dbReference type="NCBI Taxonomy" id="487214"/>
    <lineage>
        <taxon>Bacteria</taxon>
        <taxon>Bacillati</taxon>
        <taxon>Bacillota</taxon>
        <taxon>Bacilli</taxon>
        <taxon>Lactobacillales</taxon>
        <taxon>Streptococcaceae</taxon>
        <taxon>Streptococcus</taxon>
    </lineage>
</organism>
<proteinExistence type="inferred from homology"/>